<dbReference type="PIR" id="S33271">
    <property type="entry name" value="A37338"/>
</dbReference>
<dbReference type="PDB" id="1NWO">
    <property type="method" value="X-ray"/>
    <property type="resolution" value="1.92 A"/>
    <property type="chains" value="A/B=1-128"/>
</dbReference>
<dbReference type="PDB" id="1NWP">
    <property type="method" value="X-ray"/>
    <property type="resolution" value="1.60 A"/>
    <property type="chains" value="A/B=1-128"/>
</dbReference>
<dbReference type="PDBsum" id="1NWO"/>
<dbReference type="PDBsum" id="1NWP"/>
<dbReference type="SMR" id="P34097"/>
<dbReference type="EvolutionaryTrace" id="P34097"/>
<dbReference type="GO" id="GO:0042597">
    <property type="term" value="C:periplasmic space"/>
    <property type="evidence" value="ECO:0007669"/>
    <property type="project" value="UniProtKB-SubCell"/>
</dbReference>
<dbReference type="GO" id="GO:0005507">
    <property type="term" value="F:copper ion binding"/>
    <property type="evidence" value="ECO:0007669"/>
    <property type="project" value="InterPro"/>
</dbReference>
<dbReference type="GO" id="GO:0009055">
    <property type="term" value="F:electron transfer activity"/>
    <property type="evidence" value="ECO:0007669"/>
    <property type="project" value="InterPro"/>
</dbReference>
<dbReference type="CDD" id="cd13922">
    <property type="entry name" value="Azurin"/>
    <property type="match status" value="1"/>
</dbReference>
<dbReference type="FunFam" id="2.60.40.420:FF:000040">
    <property type="entry name" value="Azurin"/>
    <property type="match status" value="1"/>
</dbReference>
<dbReference type="Gene3D" id="2.60.40.420">
    <property type="entry name" value="Cupredoxins - blue copper proteins"/>
    <property type="match status" value="1"/>
</dbReference>
<dbReference type="InterPro" id="IPR014068">
    <property type="entry name" value="Azurin"/>
</dbReference>
<dbReference type="InterPro" id="IPR000923">
    <property type="entry name" value="BlueCu_1"/>
</dbReference>
<dbReference type="InterPro" id="IPR028871">
    <property type="entry name" value="BlueCu_1_BS"/>
</dbReference>
<dbReference type="InterPro" id="IPR050845">
    <property type="entry name" value="Cu-binding_ET"/>
</dbReference>
<dbReference type="InterPro" id="IPR008972">
    <property type="entry name" value="Cupredoxin"/>
</dbReference>
<dbReference type="NCBIfam" id="TIGR02695">
    <property type="entry name" value="azurin"/>
    <property type="match status" value="1"/>
</dbReference>
<dbReference type="PANTHER" id="PTHR38439">
    <property type="entry name" value="AURACYANIN-B"/>
    <property type="match status" value="1"/>
</dbReference>
<dbReference type="PANTHER" id="PTHR38439:SF2">
    <property type="entry name" value="OUTER MEMBRANE PROTEIN H.8"/>
    <property type="match status" value="1"/>
</dbReference>
<dbReference type="Pfam" id="PF00127">
    <property type="entry name" value="Copper-bind"/>
    <property type="match status" value="1"/>
</dbReference>
<dbReference type="SUPFAM" id="SSF49503">
    <property type="entry name" value="Cupredoxins"/>
    <property type="match status" value="1"/>
</dbReference>
<dbReference type="PROSITE" id="PS00196">
    <property type="entry name" value="COPPER_BLUE"/>
    <property type="match status" value="1"/>
</dbReference>
<sequence>AECKVTVDSTDQMSFNTKDIAIDKSCKTFTVELTHSGSLPKNVMGHNLVISKEADMQPIATDGLSAGIDKQYLKDGDARVIAHTKVIGAGEKDSVTFDVSKLAAGEKYGFFCSFPGHISMMKGTVTLK</sequence>
<organism>
    <name type="scientific">Pseudomonas putida</name>
    <name type="common">Arthrobacter siderocapsulatus</name>
    <dbReference type="NCBI Taxonomy" id="303"/>
    <lineage>
        <taxon>Bacteria</taxon>
        <taxon>Pseudomonadati</taxon>
        <taxon>Pseudomonadota</taxon>
        <taxon>Gammaproteobacteria</taxon>
        <taxon>Pseudomonadales</taxon>
        <taxon>Pseudomonadaceae</taxon>
        <taxon>Pseudomonas</taxon>
    </lineage>
</organism>
<evidence type="ECO:0007829" key="1">
    <source>
        <dbReference type="PDB" id="1NWP"/>
    </source>
</evidence>
<keyword id="KW-0002">3D-structure</keyword>
<keyword id="KW-0186">Copper</keyword>
<keyword id="KW-0903">Direct protein sequencing</keyword>
<keyword id="KW-1015">Disulfide bond</keyword>
<keyword id="KW-0249">Electron transport</keyword>
<keyword id="KW-0479">Metal-binding</keyword>
<keyword id="KW-0574">Periplasm</keyword>
<keyword id="KW-0813">Transport</keyword>
<proteinExistence type="evidence at protein level"/>
<feature type="chain" id="PRO_0000085551" description="Azurin">
    <location>
        <begin position="1"/>
        <end position="128"/>
    </location>
</feature>
<feature type="domain" description="Plastocyanin-like">
    <location>
        <begin position="1"/>
        <end position="128"/>
    </location>
</feature>
<feature type="binding site">
    <location>
        <position position="46"/>
    </location>
    <ligand>
        <name>Cu cation</name>
        <dbReference type="ChEBI" id="CHEBI:23378"/>
    </ligand>
</feature>
<feature type="binding site">
    <location>
        <position position="112"/>
    </location>
    <ligand>
        <name>Cu cation</name>
        <dbReference type="ChEBI" id="CHEBI:23378"/>
    </ligand>
</feature>
<feature type="binding site">
    <location>
        <position position="117"/>
    </location>
    <ligand>
        <name>Cu cation</name>
        <dbReference type="ChEBI" id="CHEBI:23378"/>
    </ligand>
</feature>
<feature type="binding site">
    <location>
        <position position="121"/>
    </location>
    <ligand>
        <name>Cu cation</name>
        <dbReference type="ChEBI" id="CHEBI:23378"/>
    </ligand>
</feature>
<feature type="disulfide bond">
    <location>
        <begin position="3"/>
        <end position="26"/>
    </location>
</feature>
<feature type="strand" evidence="1">
    <location>
        <begin position="4"/>
        <end position="9"/>
    </location>
</feature>
<feature type="strand" evidence="1">
    <location>
        <begin position="18"/>
        <end position="23"/>
    </location>
</feature>
<feature type="strand" evidence="1">
    <location>
        <begin position="27"/>
        <end position="35"/>
    </location>
</feature>
<feature type="helix" evidence="1">
    <location>
        <begin position="41"/>
        <end position="44"/>
    </location>
</feature>
<feature type="strand" evidence="1">
    <location>
        <begin position="49"/>
        <end position="52"/>
    </location>
</feature>
<feature type="helix" evidence="1">
    <location>
        <begin position="53"/>
        <end position="55"/>
    </location>
</feature>
<feature type="helix" evidence="1">
    <location>
        <begin position="56"/>
        <end position="63"/>
    </location>
</feature>
<feature type="turn" evidence="1">
    <location>
        <begin position="64"/>
        <end position="66"/>
    </location>
</feature>
<feature type="helix" evidence="1">
    <location>
        <begin position="68"/>
        <end position="70"/>
    </location>
</feature>
<feature type="strand" evidence="1">
    <location>
        <begin position="80"/>
        <end position="83"/>
    </location>
</feature>
<feature type="strand" evidence="1">
    <location>
        <begin position="92"/>
        <end position="98"/>
    </location>
</feature>
<feature type="helix" evidence="1">
    <location>
        <begin position="99"/>
        <end position="101"/>
    </location>
</feature>
<feature type="strand" evidence="1">
    <location>
        <begin position="108"/>
        <end position="111"/>
    </location>
</feature>
<feature type="helix" evidence="1">
    <location>
        <begin position="118"/>
        <end position="120"/>
    </location>
</feature>
<feature type="strand" evidence="1">
    <location>
        <begin position="121"/>
        <end position="128"/>
    </location>
</feature>
<protein>
    <recommendedName>
        <fullName>Azurin</fullName>
    </recommendedName>
</protein>
<name>AZUR_PSEPU</name>
<accession>P34097</accession>
<comment type="function">
    <text>Transfers electrons from cytochrome c551 to cytochrome oxidase.</text>
</comment>
<comment type="subcellular location">
    <subcellularLocation>
        <location>Periplasm</location>
    </subcellularLocation>
</comment>
<reference key="1">
    <citation type="journal article" date="1993" name="Arch. Biochem. Biophys.">
        <title>The amino acid sequence of Pseudomonas putida azurin.</title>
        <authorList>
            <person name="Barber M.J."/>
            <person name="Trimboli A."/>
            <person name="McIntire W.S."/>
        </authorList>
    </citation>
    <scope>PROTEIN SEQUENCE</scope>
    <source>
        <strain>NCIMB 9869</strain>
    </source>
</reference>
<reference key="2">
    <citation type="journal article" date="1998" name="Acta Crystallogr. D">
        <title>Crystallographic study of azurin from Pseudomonas putida.</title>
        <authorList>
            <person name="Chen Z.-W."/>
            <person name="Barber M.J."/>
            <person name="McIntire W.S."/>
            <person name="Mathews F.S."/>
        </authorList>
    </citation>
    <scope>X-RAY CRYSTALLOGRAPHY (1.92 ANGSTROMS)</scope>
    <source>
        <strain>NCIMB 9869</strain>
    </source>
</reference>